<comment type="function">
    <text evidence="2 3">Activates Rho-GTPases by promoting the exchange of GDP for GTP. May be involved in epithelial barrier permeability, cell motility and polarization, dendritic spine morphology, antigen presentation, leukemic cell differentiation, cell cycle regulation, innate immune response, and cancer. Binds Rac-GTPases, but does not seem to promote nucleotide exchange activity toward Rac-GTPases. May stimulate instead the cortical activity of Rac. Inactive toward CDC42, TC10, or Ras-GTPases. Forms an intracellular sensing system along with NOD1 for the detection of microbial effectors during cell invasion by pathogens. Involved in innate immune signaling transduction pathway promoting cytokine IL6/interleukin-6 and TNF-alpha secretion in macrophage upon stimulation by bacterial peptidoglycans; acts as a signaling intermediate between NOD2 receptor and RIPK2 kinase. Contributes to the tyrosine phosphorylation of RIPK2 through Src tyrosine kinase leading to NF-kappaB activation by NOD2. Overexpression activates Rho-, but not Rac-GTPases, and increases paracellular permeability. Involved in neuronal progenitor cell division and differentiation. Involved in the migration of precerebellar neurons.</text>
</comment>
<comment type="subunit">
    <text evidence="1 3">Found in a complex composed at least of ARHGEF2, NOD2 and RIPK2. Interacts with RIPK2; the interaction mediates tyrosine phosphorylation of RIPK2 by Src kinase CSK. Interacts with RIPK1 and RIPK3. Interacts with YWHAZ/14-3-3 zeta; when phosphorylated at Ser-860. Interacts with the kinases PAK4, AURKA and MAPK1. Interacts with RHOA and RAC1. Interacts with NOD1 (By similarity). Interacts (via the N- terminal zinc finger) with CAPN6 (via domain II). Interacts with DYNLT1 (By similarity).</text>
</comment>
<comment type="subcellular location">
    <subcellularLocation>
        <location evidence="3 4">Cytoplasm</location>
        <location evidence="3 4">Cytoskeleton</location>
    </subcellularLocation>
    <subcellularLocation>
        <location evidence="3 4">Cytoplasm</location>
    </subcellularLocation>
    <subcellularLocation>
        <location evidence="3 4">Cell junction</location>
        <location evidence="3 4">Tight junction</location>
    </subcellularLocation>
    <subcellularLocation>
        <location evidence="4">Golgi apparatus</location>
    </subcellularLocation>
    <subcellularLocation>
        <location evidence="3 4">Cytoplasm</location>
        <location evidence="3 4">Cytoskeleton</location>
        <location evidence="3 4">Spindle</location>
    </subcellularLocation>
    <subcellularLocation>
        <location evidence="4">Cytoplasmic vesicle</location>
    </subcellularLocation>
    <text evidence="4">Localizes to the tips of cortical microtubules of the mitotic spindle during cell division, and is further released upon microtubule depolymerization. Colocalized with NOD2 and RIPK2 in vesicles and with the cytoskeleton.</text>
</comment>
<comment type="domain">
    <text evidence="1">The DH (DBL-homology) domain promotes tyrosine phosphorylation of RIPK2 (By similarity). The DH (DBL-homology) domain interacts with and promotes loading of GTP on RhoA.</text>
</comment>
<comment type="domain">
    <text evidence="4">The PH domain has no affinity for phosphoinositides suggesting that it does not interact directly with membranes.</text>
</comment>
<comment type="domain">
    <text evidence="4">The phorbol-ester/DAG-type zinc-finger and the C-terminal coiled-coil domains (606-986) are both important for association with microtubules.</text>
</comment>
<comment type="PTM">
    <text evidence="1">Phosphorylation of Ser-860 by PAK1 induces binding to protein YWHAZ, promoting its relocation to microtubules and the inhibition of its activity. Phosphorylated by AURKA and CDK1 during mitosis, which negatively regulates its activity. Phosphorylation by MAPK1 or MAPK3 increases nucleotide exchange activity. Phosphorylation by PAK4 releases GEF-H1 from the microtubules. Phosphorylated on serine, threonine and tyrosine residues in a RIPK2-dependent manner (By similarity).</text>
</comment>
<feature type="chain" id="PRO_0000345623" description="Rho guanine nucleotide exchange factor 2">
    <location>
        <begin position="1"/>
        <end position="961"/>
    </location>
</feature>
<feature type="domain" description="DH" evidence="6">
    <location>
        <begin position="209"/>
        <end position="406"/>
    </location>
</feature>
<feature type="domain" description="PH" evidence="7">
    <location>
        <begin position="446"/>
        <end position="545"/>
    </location>
</feature>
<feature type="zinc finger region" description="Phorbol-ester/DAG-type" evidence="8">
    <location>
        <begin position="12"/>
        <end position="59"/>
    </location>
</feature>
<feature type="region of interest" description="Interaction with DYNLT1" evidence="3">
    <location>
        <begin position="104"/>
        <end position="134"/>
    </location>
</feature>
<feature type="region of interest" description="Disordered" evidence="9">
    <location>
        <begin position="659"/>
        <end position="679"/>
    </location>
</feature>
<feature type="region of interest" description="Disordered" evidence="9">
    <location>
        <begin position="742"/>
        <end position="770"/>
    </location>
</feature>
<feature type="region of interest" description="Disordered" evidence="9">
    <location>
        <begin position="867"/>
        <end position="961"/>
    </location>
</feature>
<feature type="coiled-coil region" evidence="5">
    <location>
        <begin position="561"/>
        <end position="588"/>
    </location>
</feature>
<feature type="coiled-coil region" evidence="5">
    <location>
        <begin position="772"/>
        <end position="841"/>
    </location>
</feature>
<feature type="compositionally biased region" description="Basic and acidic residues" evidence="9">
    <location>
        <begin position="742"/>
        <end position="761"/>
    </location>
</feature>
<feature type="compositionally biased region" description="Basic and acidic residues" evidence="9">
    <location>
        <begin position="894"/>
        <end position="913"/>
    </location>
</feature>
<feature type="compositionally biased region" description="Acidic residues" evidence="9">
    <location>
        <begin position="915"/>
        <end position="925"/>
    </location>
</feature>
<feature type="modified residue" description="Phosphoserine" evidence="4">
    <location>
        <position position="82"/>
    </location>
</feature>
<feature type="modified residue" description="Phosphoserine" evidence="4">
    <location>
        <position position="95"/>
    </location>
</feature>
<feature type="modified residue" description="Phosphoserine" evidence="4">
    <location>
        <position position="102"/>
    </location>
</feature>
<feature type="modified residue" description="Phosphoserine" evidence="4">
    <location>
        <position position="106"/>
    </location>
</feature>
<feature type="modified residue" description="Phosphoserine" evidence="4">
    <location>
        <position position="110"/>
    </location>
</feature>
<feature type="modified residue" description="Phosphoserine" evidence="4">
    <location>
        <position position="124"/>
    </location>
</feature>
<feature type="modified residue" description="Phosphoserine" evidence="4">
    <location>
        <position position="136"/>
    </location>
</feature>
<feature type="modified residue" description="Phosphoserine" evidence="4">
    <location>
        <position position="145"/>
    </location>
</feature>
<feature type="modified residue" description="Phosphoserine" evidence="4">
    <location>
        <position position="147"/>
    </location>
</feature>
<feature type="modified residue" description="Phosphoserine" evidence="4">
    <location>
        <position position="150"/>
    </location>
</feature>
<feature type="modified residue" description="N6-acetyllysine" evidence="4">
    <location>
        <position position="327"/>
    </location>
</feature>
<feature type="modified residue" description="Phosphoserine" evidence="4">
    <location>
        <position position="619"/>
    </location>
</feature>
<feature type="modified residue" description="Phosphoserine" evidence="4">
    <location>
        <position position="622"/>
    </location>
</feature>
<feature type="modified residue" description="Phosphothreonine; by MAPK1 or MAPK3" evidence="4">
    <location>
        <position position="653"/>
    </location>
</feature>
<feature type="modified residue" description="Phosphoserine" evidence="4">
    <location>
        <position position="665"/>
    </location>
</feature>
<feature type="modified residue" description="Phosphoserine" evidence="4">
    <location>
        <position position="670"/>
    </location>
</feature>
<feature type="modified residue" description="Phosphoserine" evidence="4">
    <location>
        <position position="685"/>
    </location>
</feature>
<feature type="modified residue" description="Phosphoserine" evidence="2">
    <location>
        <position position="756"/>
    </location>
</feature>
<feature type="modified residue" description="Phosphoserine; by PAK1 and AURKA" evidence="4">
    <location>
        <position position="860"/>
    </location>
</feature>
<feature type="modified residue" description="Phosphotyrosine" evidence="4">
    <location>
        <position position="868"/>
    </location>
</feature>
<feature type="modified residue" description="Phosphoserine; by PAK4" evidence="4">
    <location>
        <position position="870"/>
    </location>
</feature>
<feature type="modified residue" description="Phosphoserine" evidence="4">
    <location>
        <position position="906"/>
    </location>
</feature>
<feature type="modified residue" description="Phosphoserine" evidence="4">
    <location>
        <position position="914"/>
    </location>
</feature>
<feature type="modified residue" description="Phosphoserine" evidence="4">
    <location>
        <position position="915"/>
    </location>
</feature>
<feature type="modified residue" description="Phosphothreonine" evidence="4">
    <location>
        <position position="919"/>
    </location>
</feature>
<feature type="modified residue" description="Phosphoserine" evidence="4">
    <location>
        <position position="921"/>
    </location>
</feature>
<feature type="modified residue" description="Phosphoserine" evidence="2">
    <location>
        <position position="927"/>
    </location>
</feature>
<feature type="modified residue" description="Phosphoserine" evidence="4">
    <location>
        <position position="928"/>
    </location>
</feature>
<feature type="modified residue" description="Phosphoserine" evidence="4">
    <location>
        <position position="931"/>
    </location>
</feature>
<feature type="modified residue" description="Phosphoserine; by CDK1" evidence="4">
    <location>
        <position position="935"/>
    </location>
</feature>
<name>ARHG2_PIG</name>
<proteinExistence type="evidence at transcript level"/>
<keyword id="KW-0007">Acetylation</keyword>
<keyword id="KW-0131">Cell cycle</keyword>
<keyword id="KW-0132">Cell division</keyword>
<keyword id="KW-0965">Cell junction</keyword>
<keyword id="KW-0175">Coiled coil</keyword>
<keyword id="KW-0963">Cytoplasm</keyword>
<keyword id="KW-0968">Cytoplasmic vesicle</keyword>
<keyword id="KW-0206">Cytoskeleton</keyword>
<keyword id="KW-0217">Developmental protein</keyword>
<keyword id="KW-0221">Differentiation</keyword>
<keyword id="KW-0333">Golgi apparatus</keyword>
<keyword id="KW-0344">Guanine-nucleotide releasing factor</keyword>
<keyword id="KW-0391">Immunity</keyword>
<keyword id="KW-0399">Innate immunity</keyword>
<keyword id="KW-0479">Metal-binding</keyword>
<keyword id="KW-0493">Microtubule</keyword>
<keyword id="KW-0498">Mitosis</keyword>
<keyword id="KW-0524">Neurogenesis</keyword>
<keyword id="KW-0597">Phosphoprotein</keyword>
<keyword id="KW-0656">Proto-oncogene</keyword>
<keyword id="KW-1185">Reference proteome</keyword>
<keyword id="KW-0796">Tight junction</keyword>
<keyword id="KW-0862">Zinc</keyword>
<keyword id="KW-0863">Zinc-finger</keyword>
<dbReference type="EMBL" id="AB364503">
    <property type="protein sequence ID" value="BAG24505.1"/>
    <property type="molecule type" value="mRNA"/>
</dbReference>
<dbReference type="RefSeq" id="NP_001121935.1">
    <property type="nucleotide sequence ID" value="NM_001128463.1"/>
</dbReference>
<dbReference type="SMR" id="B2DCZ9"/>
<dbReference type="FunCoup" id="B2DCZ9">
    <property type="interactions" value="1634"/>
</dbReference>
<dbReference type="STRING" id="9823.ENSSSCP00000034411"/>
<dbReference type="iPTMnet" id="B2DCZ9"/>
<dbReference type="PaxDb" id="9823-ENSSSCP00000006929"/>
<dbReference type="PeptideAtlas" id="B2DCZ9"/>
<dbReference type="GeneID" id="100145887"/>
<dbReference type="KEGG" id="ssc:100145887"/>
<dbReference type="CTD" id="9181"/>
<dbReference type="eggNOG" id="KOG3520">
    <property type="taxonomic scope" value="Eukaryota"/>
</dbReference>
<dbReference type="InParanoid" id="B2DCZ9"/>
<dbReference type="OrthoDB" id="28045at2759"/>
<dbReference type="Proteomes" id="UP000008227">
    <property type="component" value="Unplaced"/>
</dbReference>
<dbReference type="Proteomes" id="UP000314985">
    <property type="component" value="Unplaced"/>
</dbReference>
<dbReference type="Proteomes" id="UP000694570">
    <property type="component" value="Unplaced"/>
</dbReference>
<dbReference type="Proteomes" id="UP000694571">
    <property type="component" value="Unplaced"/>
</dbReference>
<dbReference type="Proteomes" id="UP000694720">
    <property type="component" value="Unplaced"/>
</dbReference>
<dbReference type="Proteomes" id="UP000694722">
    <property type="component" value="Unplaced"/>
</dbReference>
<dbReference type="Proteomes" id="UP000694723">
    <property type="component" value="Unplaced"/>
</dbReference>
<dbReference type="Proteomes" id="UP000694724">
    <property type="component" value="Unplaced"/>
</dbReference>
<dbReference type="Proteomes" id="UP000694725">
    <property type="component" value="Unplaced"/>
</dbReference>
<dbReference type="Proteomes" id="UP000694726">
    <property type="component" value="Unplaced"/>
</dbReference>
<dbReference type="Proteomes" id="UP000694727">
    <property type="component" value="Unplaced"/>
</dbReference>
<dbReference type="Proteomes" id="UP000694728">
    <property type="component" value="Unplaced"/>
</dbReference>
<dbReference type="GO" id="GO:0005923">
    <property type="term" value="C:bicellular tight junction"/>
    <property type="evidence" value="ECO:0007669"/>
    <property type="project" value="UniProtKB-SubCell"/>
</dbReference>
<dbReference type="GO" id="GO:0005737">
    <property type="term" value="C:cytoplasm"/>
    <property type="evidence" value="ECO:0000250"/>
    <property type="project" value="UniProtKB"/>
</dbReference>
<dbReference type="GO" id="GO:0031410">
    <property type="term" value="C:cytoplasmic vesicle"/>
    <property type="evidence" value="ECO:0007669"/>
    <property type="project" value="UniProtKB-KW"/>
</dbReference>
<dbReference type="GO" id="GO:0005856">
    <property type="term" value="C:cytoskeleton"/>
    <property type="evidence" value="ECO:0000250"/>
    <property type="project" value="UniProtKB"/>
</dbReference>
<dbReference type="GO" id="GO:0005794">
    <property type="term" value="C:Golgi apparatus"/>
    <property type="evidence" value="ECO:0007669"/>
    <property type="project" value="UniProtKB-SubCell"/>
</dbReference>
<dbReference type="GO" id="GO:0005874">
    <property type="term" value="C:microtubule"/>
    <property type="evidence" value="ECO:0000250"/>
    <property type="project" value="UniProtKB"/>
</dbReference>
<dbReference type="GO" id="GO:0032991">
    <property type="term" value="C:protein-containing complex"/>
    <property type="evidence" value="ECO:0000250"/>
    <property type="project" value="UniProtKB"/>
</dbReference>
<dbReference type="GO" id="GO:0032587">
    <property type="term" value="C:ruffle membrane"/>
    <property type="evidence" value="ECO:0000250"/>
    <property type="project" value="UniProtKB"/>
</dbReference>
<dbReference type="GO" id="GO:0005819">
    <property type="term" value="C:spindle"/>
    <property type="evidence" value="ECO:0007669"/>
    <property type="project" value="UniProtKB-SubCell"/>
</dbReference>
<dbReference type="GO" id="GO:0031982">
    <property type="term" value="C:vesicle"/>
    <property type="evidence" value="ECO:0000250"/>
    <property type="project" value="UniProtKB"/>
</dbReference>
<dbReference type="GO" id="GO:0005085">
    <property type="term" value="F:guanyl-nucleotide exchange factor activity"/>
    <property type="evidence" value="ECO:0000250"/>
    <property type="project" value="UniProtKB"/>
</dbReference>
<dbReference type="GO" id="GO:0008017">
    <property type="term" value="F:microtubule binding"/>
    <property type="evidence" value="ECO:0000250"/>
    <property type="project" value="UniProtKB"/>
</dbReference>
<dbReference type="GO" id="GO:0031267">
    <property type="term" value="F:small GTPase binding"/>
    <property type="evidence" value="ECO:0000314"/>
    <property type="project" value="AgBase"/>
</dbReference>
<dbReference type="GO" id="GO:0008270">
    <property type="term" value="F:zinc ion binding"/>
    <property type="evidence" value="ECO:0007669"/>
    <property type="project" value="UniProtKB-KW"/>
</dbReference>
<dbReference type="GO" id="GO:0007015">
    <property type="term" value="P:actin filament organization"/>
    <property type="evidence" value="ECO:0000250"/>
    <property type="project" value="UniProtKB"/>
</dbReference>
<dbReference type="GO" id="GO:0055059">
    <property type="term" value="P:asymmetric neuroblast division"/>
    <property type="evidence" value="ECO:0000250"/>
    <property type="project" value="UniProtKB"/>
</dbReference>
<dbReference type="GO" id="GO:0000902">
    <property type="term" value="P:cell morphogenesis"/>
    <property type="evidence" value="ECO:0000250"/>
    <property type="project" value="UniProtKB"/>
</dbReference>
<dbReference type="GO" id="GO:0071225">
    <property type="term" value="P:cellular response to muramyl dipeptide"/>
    <property type="evidence" value="ECO:0000250"/>
    <property type="project" value="UniProtKB"/>
</dbReference>
<dbReference type="GO" id="GO:0045087">
    <property type="term" value="P:innate immune response"/>
    <property type="evidence" value="ECO:0007669"/>
    <property type="project" value="UniProtKB-KW"/>
</dbReference>
<dbReference type="GO" id="GO:0007026">
    <property type="term" value="P:negative regulation of microtubule depolymerization"/>
    <property type="evidence" value="ECO:0000250"/>
    <property type="project" value="UniProtKB"/>
</dbReference>
<dbReference type="GO" id="GO:0045742">
    <property type="term" value="P:positive regulation of epidermal growth factor receptor signaling pathway"/>
    <property type="evidence" value="ECO:0000315"/>
    <property type="project" value="AgBase"/>
</dbReference>
<dbReference type="GO" id="GO:0070374">
    <property type="term" value="P:positive regulation of ERK1 and ERK2 cascade"/>
    <property type="evidence" value="ECO:0000315"/>
    <property type="project" value="AgBase"/>
</dbReference>
<dbReference type="GO" id="GO:0032755">
    <property type="term" value="P:positive regulation of interleukin-6 production"/>
    <property type="evidence" value="ECO:0000250"/>
    <property type="project" value="UniProtKB"/>
</dbReference>
<dbReference type="GO" id="GO:1904685">
    <property type="term" value="P:positive regulation of metalloendopeptidase activity"/>
    <property type="evidence" value="ECO:0000315"/>
    <property type="project" value="AgBase"/>
</dbReference>
<dbReference type="GO" id="GO:0045666">
    <property type="term" value="P:positive regulation of neuron differentiation"/>
    <property type="evidence" value="ECO:0000250"/>
    <property type="project" value="UniProtKB"/>
</dbReference>
<dbReference type="GO" id="GO:2001224">
    <property type="term" value="P:positive regulation of neuron migration"/>
    <property type="evidence" value="ECO:0000250"/>
    <property type="project" value="UniProtKB"/>
</dbReference>
<dbReference type="GO" id="GO:0051092">
    <property type="term" value="P:positive regulation of NF-kappaB transcription factor activity"/>
    <property type="evidence" value="ECO:0000250"/>
    <property type="project" value="UniProtKB"/>
</dbReference>
<dbReference type="GO" id="GO:1900745">
    <property type="term" value="P:positive regulation of p38MAPK cascade"/>
    <property type="evidence" value="ECO:0000315"/>
    <property type="project" value="AgBase"/>
</dbReference>
<dbReference type="GO" id="GO:0050731">
    <property type="term" value="P:positive regulation of peptidyl-tyrosine phosphorylation"/>
    <property type="evidence" value="ECO:0000250"/>
    <property type="project" value="UniProtKB"/>
</dbReference>
<dbReference type="GO" id="GO:0035022">
    <property type="term" value="P:positive regulation of Rac protein signal transduction"/>
    <property type="evidence" value="ECO:0000315"/>
    <property type="project" value="AgBase"/>
</dbReference>
<dbReference type="GO" id="GO:0045944">
    <property type="term" value="P:positive regulation of transcription by RNA polymerase II"/>
    <property type="evidence" value="ECO:0000250"/>
    <property type="project" value="UniProtKB"/>
</dbReference>
<dbReference type="GO" id="GO:0032760">
    <property type="term" value="P:positive regulation of tumor necrosis factor production"/>
    <property type="evidence" value="ECO:0000250"/>
    <property type="project" value="UniProtKB"/>
</dbReference>
<dbReference type="GO" id="GO:0090303">
    <property type="term" value="P:positive regulation of wound healing"/>
    <property type="evidence" value="ECO:0000315"/>
    <property type="project" value="AgBase"/>
</dbReference>
<dbReference type="GO" id="GO:0035023">
    <property type="term" value="P:regulation of Rho protein signal transduction"/>
    <property type="evidence" value="ECO:0000318"/>
    <property type="project" value="GO_Central"/>
</dbReference>
<dbReference type="GO" id="GO:0033209">
    <property type="term" value="P:tumor necrosis factor-mediated signaling pathway"/>
    <property type="evidence" value="ECO:0000315"/>
    <property type="project" value="AgBase"/>
</dbReference>
<dbReference type="CDD" id="cd20877">
    <property type="entry name" value="C1_ARHGEF2"/>
    <property type="match status" value="1"/>
</dbReference>
<dbReference type="CDD" id="cd13393">
    <property type="entry name" value="PH_ARHGEF2"/>
    <property type="match status" value="1"/>
</dbReference>
<dbReference type="CDD" id="cd00160">
    <property type="entry name" value="RhoGEF"/>
    <property type="match status" value="1"/>
</dbReference>
<dbReference type="FunFam" id="1.20.900.10:FF:000004">
    <property type="entry name" value="Rho guanine nucleotide exchange factor 2"/>
    <property type="match status" value="1"/>
</dbReference>
<dbReference type="FunFam" id="2.30.29.30:FF:000021">
    <property type="entry name" value="Rho guanine nucleotide exchange factor 2"/>
    <property type="match status" value="1"/>
</dbReference>
<dbReference type="Gene3D" id="3.30.60.20">
    <property type="match status" value="1"/>
</dbReference>
<dbReference type="Gene3D" id="1.20.900.10">
    <property type="entry name" value="Dbl homology (DH) domain"/>
    <property type="match status" value="1"/>
</dbReference>
<dbReference type="Gene3D" id="2.30.29.30">
    <property type="entry name" value="Pleckstrin-homology domain (PH domain)/Phosphotyrosine-binding domain (PTB)"/>
    <property type="match status" value="1"/>
</dbReference>
<dbReference type="InterPro" id="IPR037806">
    <property type="entry name" value="ARHGEF2_PH"/>
</dbReference>
<dbReference type="InterPro" id="IPR046349">
    <property type="entry name" value="C1-like_sf"/>
</dbReference>
<dbReference type="InterPro" id="IPR035899">
    <property type="entry name" value="DBL_dom_sf"/>
</dbReference>
<dbReference type="InterPro" id="IPR000219">
    <property type="entry name" value="DH_dom"/>
</dbReference>
<dbReference type="InterPro" id="IPR002219">
    <property type="entry name" value="PE/DAG-bd"/>
</dbReference>
<dbReference type="InterPro" id="IPR011993">
    <property type="entry name" value="PH-like_dom_sf"/>
</dbReference>
<dbReference type="InterPro" id="IPR041020">
    <property type="entry name" value="PH_16"/>
</dbReference>
<dbReference type="InterPro" id="IPR001849">
    <property type="entry name" value="PH_domain"/>
</dbReference>
<dbReference type="InterPro" id="IPR051632">
    <property type="entry name" value="Rho_GEF"/>
</dbReference>
<dbReference type="PANTHER" id="PTHR13944">
    <property type="entry name" value="AGAP007712-PA"/>
    <property type="match status" value="1"/>
</dbReference>
<dbReference type="PANTHER" id="PTHR13944:SF20">
    <property type="entry name" value="RHO GUANINE NUCLEOTIDE EXCHANGE FACTOR 2"/>
    <property type="match status" value="1"/>
</dbReference>
<dbReference type="Pfam" id="PF17838">
    <property type="entry name" value="PH_16"/>
    <property type="match status" value="1"/>
</dbReference>
<dbReference type="Pfam" id="PF00621">
    <property type="entry name" value="RhoGEF"/>
    <property type="match status" value="1"/>
</dbReference>
<dbReference type="SMART" id="SM00109">
    <property type="entry name" value="C1"/>
    <property type="match status" value="1"/>
</dbReference>
<dbReference type="SMART" id="SM00233">
    <property type="entry name" value="PH"/>
    <property type="match status" value="1"/>
</dbReference>
<dbReference type="SMART" id="SM00325">
    <property type="entry name" value="RhoGEF"/>
    <property type="match status" value="1"/>
</dbReference>
<dbReference type="SUPFAM" id="SSF57889">
    <property type="entry name" value="Cysteine-rich domain"/>
    <property type="match status" value="1"/>
</dbReference>
<dbReference type="SUPFAM" id="SSF48065">
    <property type="entry name" value="DBL homology domain (DH-domain)"/>
    <property type="match status" value="1"/>
</dbReference>
<dbReference type="SUPFAM" id="SSF50729">
    <property type="entry name" value="PH domain-like"/>
    <property type="match status" value="1"/>
</dbReference>
<dbReference type="PROSITE" id="PS50010">
    <property type="entry name" value="DH_2"/>
    <property type="match status" value="1"/>
</dbReference>
<dbReference type="PROSITE" id="PS50003">
    <property type="entry name" value="PH_DOMAIN"/>
    <property type="match status" value="1"/>
</dbReference>
<dbReference type="PROSITE" id="PS00479">
    <property type="entry name" value="ZF_DAG_PE_1"/>
    <property type="match status" value="1"/>
</dbReference>
<dbReference type="PROSITE" id="PS50081">
    <property type="entry name" value="ZF_DAG_PE_2"/>
    <property type="match status" value="1"/>
</dbReference>
<gene>
    <name type="primary">ARHGEF2</name>
</gene>
<accession>B2DCZ9</accession>
<sequence>MKEAKDARYTNGHLFTTISVSGMTMCYACNKSITAKEALICPTCNVTIHNRCKDTLANCTKVKQKQQKAALLKNNTALQSVSLRSKTTTRERPSSAIYPSDSFRQSLLGSRRGRSPLSLAKSVSTTNIAGHFNDESPLGLRRILSQSTDSLNMRNRTLSVESLIDEGAEVIYNELMSDFEMGEKDFAADSWSLAVDSSFLQQHKKEVMKQQDVIYELIQTELHHVRTLKIMTRLFRTGMLEELQLEPGVVQGLFPCVDELSDIHTRFLSQLLERRRQALCPGSPRNFVIHRLGDLLITQFSGPSADQMRKTYSEFCSRHTKALKLYKELYARDKRFQQFIRKVTRSAVLKRHGVQECILLVTQRITKYPVLISRILQHTHGIEEERQDLTTALGLVKELLSNVDQDVHELEKGARLQEIYNRMDPRAQTPVPGKGPFGREELLRRKLIHDGCLLWKTAAGRFKDVLMLLMTDVLVFLQEKDQKYIFPALDKPSVVSLQNLIVRDIANQEKGMFLISAAPPEMYEVHTASRDDRSTWIRVIQQSVRVCPSREDFPLIETEDEAYLRRIKMELQQKDRALVELLQEKVGLFAEMTHFQVEEDGGGGMPLPTLPRGLFRSESLESPRGERLLQDAIREVEGLKDLLVGPGVELLLTSREPALPVETDSGGNTSPGVTANGEARTFNGSIELCRADSDSSQKDRNGNQLRSPQEEALQRLVNLYGLLHGLQAAVAQQDTLMEARFPEGPERREKLTRANSRDGEAGRAGAAPVAPEKQATELALLQRQHALLQEELRRCRRLGEERATEAGSLEARLRESEQARALLEREVEEARRQLAALGHTEPLPAEAPWARRPLDPRRRSLPAGDALYLSFTPPQPSRGHDRLDLPVTIRSVHRPFEDRERQELGSPDERLQDSSDPDTGSEEEGSSSRLSPPHSPRDFTRMQDIPEETESRDGEPVASES</sequence>
<organism>
    <name type="scientific">Sus scrofa</name>
    <name type="common">Pig</name>
    <dbReference type="NCBI Taxonomy" id="9823"/>
    <lineage>
        <taxon>Eukaryota</taxon>
        <taxon>Metazoa</taxon>
        <taxon>Chordata</taxon>
        <taxon>Craniata</taxon>
        <taxon>Vertebrata</taxon>
        <taxon>Euteleostomi</taxon>
        <taxon>Mammalia</taxon>
        <taxon>Eutheria</taxon>
        <taxon>Laurasiatheria</taxon>
        <taxon>Artiodactyla</taxon>
        <taxon>Suina</taxon>
        <taxon>Suidae</taxon>
        <taxon>Sus</taxon>
    </lineage>
</organism>
<reference key="1">
    <citation type="submission" date="2007-10" db="EMBL/GenBank/DDBJ databases">
        <title>Identification of down-regulated genes in pig mesenteric adipocyte differentiation.</title>
        <authorList>
            <person name="Suzuki S."/>
        </authorList>
    </citation>
    <scope>NUCLEOTIDE SEQUENCE [MRNA]</scope>
</reference>
<reference key="2">
    <citation type="journal article" date="2008" name="Trends Cell Biol.">
        <title>Cellular functions of GEF-H1, a microtubule-regulated Rho-GEF: is altered GEF-H1 activity a crucial determinant of disease pathogenesis?</title>
        <authorList>
            <person name="Birkenfeld J."/>
            <person name="Nalbant P."/>
            <person name="Yoon S.-H."/>
            <person name="Bokoch G.M."/>
        </authorList>
    </citation>
    <scope>REVIEW ON FUNCTION</scope>
</reference>
<evidence type="ECO:0000250" key="1"/>
<evidence type="ECO:0000250" key="2">
    <source>
        <dbReference type="UniProtKB" id="Q60875"/>
    </source>
</evidence>
<evidence type="ECO:0000250" key="3">
    <source>
        <dbReference type="UniProtKB" id="Q865S3"/>
    </source>
</evidence>
<evidence type="ECO:0000250" key="4">
    <source>
        <dbReference type="UniProtKB" id="Q92974"/>
    </source>
</evidence>
<evidence type="ECO:0000255" key="5"/>
<evidence type="ECO:0000255" key="6">
    <source>
        <dbReference type="PROSITE-ProRule" id="PRU00062"/>
    </source>
</evidence>
<evidence type="ECO:0000255" key="7">
    <source>
        <dbReference type="PROSITE-ProRule" id="PRU00145"/>
    </source>
</evidence>
<evidence type="ECO:0000255" key="8">
    <source>
        <dbReference type="PROSITE-ProRule" id="PRU00226"/>
    </source>
</evidence>
<evidence type="ECO:0000256" key="9">
    <source>
        <dbReference type="SAM" id="MobiDB-lite"/>
    </source>
</evidence>
<protein>
    <recommendedName>
        <fullName>Rho guanine nucleotide exchange factor 2</fullName>
    </recommendedName>
    <alternativeName>
        <fullName>Guanine nucleotide exchange factor H1</fullName>
        <shortName>GEF-H1</shortName>
    </alternativeName>
</protein>